<keyword id="KW-0067">ATP-binding</keyword>
<keyword id="KW-0997">Cell inner membrane</keyword>
<keyword id="KW-1003">Cell membrane</keyword>
<keyword id="KW-0472">Membrane</keyword>
<keyword id="KW-0547">Nucleotide-binding</keyword>
<keyword id="KW-0762">Sugar transport</keyword>
<keyword id="KW-1278">Translocase</keyword>
<keyword id="KW-0813">Transport</keyword>
<dbReference type="EC" id="7.6.2.10" evidence="1"/>
<dbReference type="EMBL" id="AE017220">
    <property type="protein sequence ID" value="AAX67389.1"/>
    <property type="molecule type" value="Genomic_DNA"/>
</dbReference>
<dbReference type="RefSeq" id="WP_011264401.1">
    <property type="nucleotide sequence ID" value="NC_006905.1"/>
</dbReference>
<dbReference type="SMR" id="Q57IS3"/>
<dbReference type="KEGG" id="sec:SCH_3483"/>
<dbReference type="HOGENOM" id="CLU_000604_1_1_6"/>
<dbReference type="Proteomes" id="UP000000538">
    <property type="component" value="Chromosome"/>
</dbReference>
<dbReference type="GO" id="GO:0055052">
    <property type="term" value="C:ATP-binding cassette (ABC) transporter complex, substrate-binding subunit-containing"/>
    <property type="evidence" value="ECO:0007669"/>
    <property type="project" value="TreeGrafter"/>
</dbReference>
<dbReference type="GO" id="GO:0015430">
    <property type="term" value="F:ABC-type glycerol-3-phosphate transporter activity"/>
    <property type="evidence" value="ECO:0007669"/>
    <property type="project" value="UniProtKB-EC"/>
</dbReference>
<dbReference type="GO" id="GO:0005524">
    <property type="term" value="F:ATP binding"/>
    <property type="evidence" value="ECO:0007669"/>
    <property type="project" value="UniProtKB-KW"/>
</dbReference>
<dbReference type="GO" id="GO:0016887">
    <property type="term" value="F:ATP hydrolysis activity"/>
    <property type="evidence" value="ECO:0007669"/>
    <property type="project" value="InterPro"/>
</dbReference>
<dbReference type="GO" id="GO:0008643">
    <property type="term" value="P:carbohydrate transport"/>
    <property type="evidence" value="ECO:0007669"/>
    <property type="project" value="InterPro"/>
</dbReference>
<dbReference type="GO" id="GO:0001407">
    <property type="term" value="P:glycerophosphodiester transmembrane transport"/>
    <property type="evidence" value="ECO:0007669"/>
    <property type="project" value="TreeGrafter"/>
</dbReference>
<dbReference type="CDD" id="cd03301">
    <property type="entry name" value="ABC_MalK_N"/>
    <property type="match status" value="1"/>
</dbReference>
<dbReference type="FunFam" id="3.40.50.300:FF:000042">
    <property type="entry name" value="Maltose/maltodextrin ABC transporter, ATP-binding protein"/>
    <property type="match status" value="1"/>
</dbReference>
<dbReference type="FunFam" id="2.40.50.100:FF:000032">
    <property type="entry name" value="sn-glycerol-3-phosphate import ATP-binding protein UgpC"/>
    <property type="match status" value="1"/>
</dbReference>
<dbReference type="FunFam" id="2.40.50.140:FF:000142">
    <property type="entry name" value="sn-glycerol-3-phosphate import ATP-binding protein UgpC"/>
    <property type="match status" value="1"/>
</dbReference>
<dbReference type="Gene3D" id="2.40.50.100">
    <property type="match status" value="1"/>
</dbReference>
<dbReference type="Gene3D" id="2.40.50.140">
    <property type="entry name" value="Nucleic acid-binding proteins"/>
    <property type="match status" value="1"/>
</dbReference>
<dbReference type="Gene3D" id="3.40.50.300">
    <property type="entry name" value="P-loop containing nucleotide triphosphate hydrolases"/>
    <property type="match status" value="1"/>
</dbReference>
<dbReference type="InterPro" id="IPR003593">
    <property type="entry name" value="AAA+_ATPase"/>
</dbReference>
<dbReference type="InterPro" id="IPR003439">
    <property type="entry name" value="ABC_transporter-like_ATP-bd"/>
</dbReference>
<dbReference type="InterPro" id="IPR017871">
    <property type="entry name" value="ABC_transporter-like_CS"/>
</dbReference>
<dbReference type="InterPro" id="IPR015855">
    <property type="entry name" value="ABC_transpr_MalK-like"/>
</dbReference>
<dbReference type="InterPro" id="IPR047641">
    <property type="entry name" value="ABC_transpr_MalK/UgpC-like"/>
</dbReference>
<dbReference type="InterPro" id="IPR008995">
    <property type="entry name" value="Mo/tungstate-bd_C_term_dom"/>
</dbReference>
<dbReference type="InterPro" id="IPR012340">
    <property type="entry name" value="NA-bd_OB-fold"/>
</dbReference>
<dbReference type="InterPro" id="IPR040582">
    <property type="entry name" value="OB_MalK-like"/>
</dbReference>
<dbReference type="InterPro" id="IPR027417">
    <property type="entry name" value="P-loop_NTPase"/>
</dbReference>
<dbReference type="NCBIfam" id="NF008653">
    <property type="entry name" value="PRK11650.1"/>
    <property type="match status" value="1"/>
</dbReference>
<dbReference type="PANTHER" id="PTHR43875">
    <property type="entry name" value="MALTODEXTRIN IMPORT ATP-BINDING PROTEIN MSMX"/>
    <property type="match status" value="1"/>
</dbReference>
<dbReference type="PANTHER" id="PTHR43875:SF12">
    <property type="entry name" value="SN-GLYCEROL-3-PHOSPHATE IMPORT ATP-BINDING PROTEIN UGPC"/>
    <property type="match status" value="1"/>
</dbReference>
<dbReference type="Pfam" id="PF00005">
    <property type="entry name" value="ABC_tran"/>
    <property type="match status" value="1"/>
</dbReference>
<dbReference type="Pfam" id="PF17912">
    <property type="entry name" value="OB_MalK"/>
    <property type="match status" value="1"/>
</dbReference>
<dbReference type="SMART" id="SM00382">
    <property type="entry name" value="AAA"/>
    <property type="match status" value="1"/>
</dbReference>
<dbReference type="SUPFAM" id="SSF50331">
    <property type="entry name" value="MOP-like"/>
    <property type="match status" value="1"/>
</dbReference>
<dbReference type="SUPFAM" id="SSF52540">
    <property type="entry name" value="P-loop containing nucleoside triphosphate hydrolases"/>
    <property type="match status" value="1"/>
</dbReference>
<dbReference type="PROSITE" id="PS00211">
    <property type="entry name" value="ABC_TRANSPORTER_1"/>
    <property type="match status" value="1"/>
</dbReference>
<dbReference type="PROSITE" id="PS50893">
    <property type="entry name" value="ABC_TRANSPORTER_2"/>
    <property type="match status" value="1"/>
</dbReference>
<dbReference type="PROSITE" id="PS51315">
    <property type="entry name" value="UGPC"/>
    <property type="match status" value="1"/>
</dbReference>
<comment type="function">
    <text evidence="1">Part of the ABC transporter complex UgpBAEC involved in sn-glycerol-3-phosphate (G3P) import. Responsible for energy coupling to the transport system.</text>
</comment>
<comment type="catalytic activity">
    <reaction evidence="1">
        <text>sn-glycerol 3-phosphate(out) + ATP + H2O = sn-glycerol 3-phosphate(in) + ADP + phosphate + H(+)</text>
        <dbReference type="Rhea" id="RHEA:21668"/>
        <dbReference type="ChEBI" id="CHEBI:15377"/>
        <dbReference type="ChEBI" id="CHEBI:15378"/>
        <dbReference type="ChEBI" id="CHEBI:30616"/>
        <dbReference type="ChEBI" id="CHEBI:43474"/>
        <dbReference type="ChEBI" id="CHEBI:57597"/>
        <dbReference type="ChEBI" id="CHEBI:456216"/>
        <dbReference type="EC" id="7.6.2.10"/>
    </reaction>
</comment>
<comment type="subunit">
    <text evidence="1">The complex is composed of two ATP-binding proteins (UgpC), two transmembrane proteins (UgpA and UgpE) and a solute-binding protein (UgpB).</text>
</comment>
<comment type="subcellular location">
    <subcellularLocation>
        <location evidence="1">Cell inner membrane</location>
        <topology evidence="1">Peripheral membrane protein</topology>
    </subcellularLocation>
</comment>
<comment type="similarity">
    <text evidence="1">Belongs to the ABC transporter superfamily. sn-glycerol-3-phosphate importer (TC 3.A.1.1.3) family.</text>
</comment>
<reference key="1">
    <citation type="journal article" date="2005" name="Nucleic Acids Res.">
        <title>The genome sequence of Salmonella enterica serovar Choleraesuis, a highly invasive and resistant zoonotic pathogen.</title>
        <authorList>
            <person name="Chiu C.-H."/>
            <person name="Tang P."/>
            <person name="Chu C."/>
            <person name="Hu S."/>
            <person name="Bao Q."/>
            <person name="Yu J."/>
            <person name="Chou Y.-Y."/>
            <person name="Wang H.-S."/>
            <person name="Lee Y.-S."/>
        </authorList>
    </citation>
    <scope>NUCLEOTIDE SEQUENCE [LARGE SCALE GENOMIC DNA]</scope>
    <source>
        <strain>SC-B67</strain>
    </source>
</reference>
<organism>
    <name type="scientific">Salmonella choleraesuis (strain SC-B67)</name>
    <dbReference type="NCBI Taxonomy" id="321314"/>
    <lineage>
        <taxon>Bacteria</taxon>
        <taxon>Pseudomonadati</taxon>
        <taxon>Pseudomonadota</taxon>
        <taxon>Gammaproteobacteria</taxon>
        <taxon>Enterobacterales</taxon>
        <taxon>Enterobacteriaceae</taxon>
        <taxon>Salmonella</taxon>
    </lineage>
</organism>
<sequence>MAGLKLQAVTKSWDGKTQIIQPLTLDVADGEFIVMVGPSGCGKSTLLRMVAGLERVTSGDIWIDRKRVTEMEPKDRGIAMVFQNYALYPHMSVEENMAWGLKIRGMSKAHIEERVREAARILELDGLLKRRPRELSGGQRQRVAMGRAIVREPAVFLFDEPLSNLDAKLRVQMRLELQHLHRRLRTTSLYVTHDQVEAMTLAQRVMVMNKGVAEQIGTPVEVYEKPASRFVASFIGSPAMNLLDGVISASGDRFELPGGLALPIGADYRGHAGRNMTLGIRPEHIALSSQAEGGVPLTVDTLEFLGADNLAHGRWGDQKLVVRLAHQQRPAAGSTLWLHLPEHQRHLFDGETGQRV</sequence>
<accession>Q57IS3</accession>
<name>UGPC_SALCH</name>
<protein>
    <recommendedName>
        <fullName evidence="1">sn-glycerol-3-phosphate import ATP-binding protein UgpC</fullName>
        <ecNumber evidence="1">7.6.2.10</ecNumber>
    </recommendedName>
</protein>
<feature type="chain" id="PRO_0000289778" description="sn-glycerol-3-phosphate import ATP-binding protein UgpC">
    <location>
        <begin position="1"/>
        <end position="356"/>
    </location>
</feature>
<feature type="domain" description="ABC transporter" evidence="1">
    <location>
        <begin position="4"/>
        <end position="235"/>
    </location>
</feature>
<feature type="binding site" evidence="1">
    <location>
        <begin position="37"/>
        <end position="44"/>
    </location>
    <ligand>
        <name>ATP</name>
        <dbReference type="ChEBI" id="CHEBI:30616"/>
    </ligand>
</feature>
<evidence type="ECO:0000255" key="1">
    <source>
        <dbReference type="HAMAP-Rule" id="MF_01727"/>
    </source>
</evidence>
<gene>
    <name evidence="1" type="primary">ugpC</name>
    <name type="ordered locus">SCH_3483</name>
</gene>
<proteinExistence type="inferred from homology"/>